<dbReference type="EMBL" id="AE009948">
    <property type="protein sequence ID" value="AAM98975.1"/>
    <property type="molecule type" value="Genomic_DNA"/>
</dbReference>
<dbReference type="RefSeq" id="NP_687103.1">
    <property type="nucleotide sequence ID" value="NC_004116.1"/>
</dbReference>
<dbReference type="RefSeq" id="WP_000440811.1">
    <property type="nucleotide sequence ID" value="NC_004116.1"/>
</dbReference>
<dbReference type="SMR" id="Q8E2C5"/>
<dbReference type="STRING" id="208435.SAG0067"/>
<dbReference type="GeneID" id="69900035"/>
<dbReference type="KEGG" id="sag:SAG0067"/>
<dbReference type="PATRIC" id="fig|208435.3.peg.66"/>
<dbReference type="HOGENOM" id="CLU_073626_1_0_9"/>
<dbReference type="OrthoDB" id="9811714at2"/>
<dbReference type="Proteomes" id="UP000000821">
    <property type="component" value="Chromosome"/>
</dbReference>
<dbReference type="GO" id="GO:0022627">
    <property type="term" value="C:cytosolic small ribosomal subunit"/>
    <property type="evidence" value="ECO:0007669"/>
    <property type="project" value="TreeGrafter"/>
</dbReference>
<dbReference type="GO" id="GO:0019843">
    <property type="term" value="F:rRNA binding"/>
    <property type="evidence" value="ECO:0007669"/>
    <property type="project" value="UniProtKB-UniRule"/>
</dbReference>
<dbReference type="GO" id="GO:0003735">
    <property type="term" value="F:structural constituent of ribosome"/>
    <property type="evidence" value="ECO:0007669"/>
    <property type="project" value="InterPro"/>
</dbReference>
<dbReference type="GO" id="GO:0006412">
    <property type="term" value="P:translation"/>
    <property type="evidence" value="ECO:0007669"/>
    <property type="project" value="UniProtKB-UniRule"/>
</dbReference>
<dbReference type="CDD" id="cd00364">
    <property type="entry name" value="Ribosomal_uS17"/>
    <property type="match status" value="1"/>
</dbReference>
<dbReference type="FunFam" id="2.40.50.140:FF:000026">
    <property type="entry name" value="30S ribosomal protein S17"/>
    <property type="match status" value="1"/>
</dbReference>
<dbReference type="Gene3D" id="2.40.50.140">
    <property type="entry name" value="Nucleic acid-binding proteins"/>
    <property type="match status" value="1"/>
</dbReference>
<dbReference type="HAMAP" id="MF_01345_B">
    <property type="entry name" value="Ribosomal_uS17_B"/>
    <property type="match status" value="1"/>
</dbReference>
<dbReference type="InterPro" id="IPR012340">
    <property type="entry name" value="NA-bd_OB-fold"/>
</dbReference>
<dbReference type="InterPro" id="IPR000266">
    <property type="entry name" value="Ribosomal_uS17"/>
</dbReference>
<dbReference type="InterPro" id="IPR019984">
    <property type="entry name" value="Ribosomal_uS17_bact/chlr"/>
</dbReference>
<dbReference type="InterPro" id="IPR019979">
    <property type="entry name" value="Ribosomal_uS17_CS"/>
</dbReference>
<dbReference type="NCBIfam" id="NF004123">
    <property type="entry name" value="PRK05610.1"/>
    <property type="match status" value="1"/>
</dbReference>
<dbReference type="NCBIfam" id="TIGR03635">
    <property type="entry name" value="uS17_bact"/>
    <property type="match status" value="1"/>
</dbReference>
<dbReference type="PANTHER" id="PTHR10744">
    <property type="entry name" value="40S RIBOSOMAL PROTEIN S11 FAMILY MEMBER"/>
    <property type="match status" value="1"/>
</dbReference>
<dbReference type="PANTHER" id="PTHR10744:SF1">
    <property type="entry name" value="SMALL RIBOSOMAL SUBUNIT PROTEIN US17M"/>
    <property type="match status" value="1"/>
</dbReference>
<dbReference type="Pfam" id="PF00366">
    <property type="entry name" value="Ribosomal_S17"/>
    <property type="match status" value="1"/>
</dbReference>
<dbReference type="PRINTS" id="PR00973">
    <property type="entry name" value="RIBOSOMALS17"/>
</dbReference>
<dbReference type="SUPFAM" id="SSF50249">
    <property type="entry name" value="Nucleic acid-binding proteins"/>
    <property type="match status" value="1"/>
</dbReference>
<dbReference type="PROSITE" id="PS00056">
    <property type="entry name" value="RIBOSOMAL_S17"/>
    <property type="match status" value="1"/>
</dbReference>
<comment type="function">
    <text evidence="1">One of the primary rRNA binding proteins, it binds specifically to the 5'-end of 16S ribosomal RNA.</text>
</comment>
<comment type="subunit">
    <text evidence="1">Part of the 30S ribosomal subunit.</text>
</comment>
<comment type="similarity">
    <text evidence="1">Belongs to the universal ribosomal protein uS17 family.</text>
</comment>
<protein>
    <recommendedName>
        <fullName evidence="1">Small ribosomal subunit protein uS17</fullName>
    </recommendedName>
    <alternativeName>
        <fullName evidence="2">30S ribosomal protein S17</fullName>
    </alternativeName>
</protein>
<sequence length="86" mass="10090">MERNQRKTLYGRVVSDKMDKTITVVVETKRNHPVYGKRINYSKKYKAHDENNVAKEGDIVRIMETRPLSATKRFRLVEVVEKAVII</sequence>
<proteinExistence type="inferred from homology"/>
<evidence type="ECO:0000255" key="1">
    <source>
        <dbReference type="HAMAP-Rule" id="MF_01345"/>
    </source>
</evidence>
<evidence type="ECO:0000305" key="2"/>
<accession>Q8E2C5</accession>
<name>RS17_STRA5</name>
<feature type="chain" id="PRO_0000233574" description="Small ribosomal subunit protein uS17">
    <location>
        <begin position="1"/>
        <end position="86"/>
    </location>
</feature>
<organism>
    <name type="scientific">Streptococcus agalactiae serotype V (strain ATCC BAA-611 / 2603 V/R)</name>
    <dbReference type="NCBI Taxonomy" id="208435"/>
    <lineage>
        <taxon>Bacteria</taxon>
        <taxon>Bacillati</taxon>
        <taxon>Bacillota</taxon>
        <taxon>Bacilli</taxon>
        <taxon>Lactobacillales</taxon>
        <taxon>Streptococcaceae</taxon>
        <taxon>Streptococcus</taxon>
    </lineage>
</organism>
<reference key="1">
    <citation type="journal article" date="2002" name="Proc. Natl. Acad. Sci. U.S.A.">
        <title>Complete genome sequence and comparative genomic analysis of an emerging human pathogen, serotype V Streptococcus agalactiae.</title>
        <authorList>
            <person name="Tettelin H."/>
            <person name="Masignani V."/>
            <person name="Cieslewicz M.J."/>
            <person name="Eisen J.A."/>
            <person name="Peterson S.N."/>
            <person name="Wessels M.R."/>
            <person name="Paulsen I.T."/>
            <person name="Nelson K.E."/>
            <person name="Margarit I."/>
            <person name="Read T.D."/>
            <person name="Madoff L.C."/>
            <person name="Wolf A.M."/>
            <person name="Beanan M.J."/>
            <person name="Brinkac L.M."/>
            <person name="Daugherty S.C."/>
            <person name="DeBoy R.T."/>
            <person name="Durkin A.S."/>
            <person name="Kolonay J.F."/>
            <person name="Madupu R."/>
            <person name="Lewis M.R."/>
            <person name="Radune D."/>
            <person name="Fedorova N.B."/>
            <person name="Scanlan D."/>
            <person name="Khouri H.M."/>
            <person name="Mulligan S."/>
            <person name="Carty H.A."/>
            <person name="Cline R.T."/>
            <person name="Van Aken S.E."/>
            <person name="Gill J."/>
            <person name="Scarselli M."/>
            <person name="Mora M."/>
            <person name="Iacobini E.T."/>
            <person name="Brettoni C."/>
            <person name="Galli G."/>
            <person name="Mariani M."/>
            <person name="Vegni F."/>
            <person name="Maione D."/>
            <person name="Rinaudo D."/>
            <person name="Rappuoli R."/>
            <person name="Telford J.L."/>
            <person name="Kasper D.L."/>
            <person name="Grandi G."/>
            <person name="Fraser C.M."/>
        </authorList>
    </citation>
    <scope>NUCLEOTIDE SEQUENCE [LARGE SCALE GENOMIC DNA]</scope>
    <source>
        <strain>ATCC BAA-611 / 2603 V/R</strain>
    </source>
</reference>
<keyword id="KW-1185">Reference proteome</keyword>
<keyword id="KW-0687">Ribonucleoprotein</keyword>
<keyword id="KW-0689">Ribosomal protein</keyword>
<keyword id="KW-0694">RNA-binding</keyword>
<keyword id="KW-0699">rRNA-binding</keyword>
<gene>
    <name evidence="1" type="primary">rpsQ</name>
    <name type="ordered locus">SAG0067</name>
</gene>